<name>OBG_PELTS</name>
<feature type="chain" id="PRO_0000386117" description="GTPase Obg">
    <location>
        <begin position="1"/>
        <end position="422"/>
    </location>
</feature>
<feature type="domain" description="Obg" evidence="3">
    <location>
        <begin position="1"/>
        <end position="158"/>
    </location>
</feature>
<feature type="domain" description="OBG-type G" evidence="1">
    <location>
        <begin position="159"/>
        <end position="329"/>
    </location>
</feature>
<feature type="domain" description="OCT" evidence="2">
    <location>
        <begin position="337"/>
        <end position="422"/>
    </location>
</feature>
<feature type="binding site" evidence="1">
    <location>
        <begin position="165"/>
        <end position="172"/>
    </location>
    <ligand>
        <name>GTP</name>
        <dbReference type="ChEBI" id="CHEBI:37565"/>
    </ligand>
</feature>
<feature type="binding site" evidence="1">
    <location>
        <position position="172"/>
    </location>
    <ligand>
        <name>Mg(2+)</name>
        <dbReference type="ChEBI" id="CHEBI:18420"/>
    </ligand>
</feature>
<feature type="binding site" evidence="1">
    <location>
        <begin position="190"/>
        <end position="194"/>
    </location>
    <ligand>
        <name>GTP</name>
        <dbReference type="ChEBI" id="CHEBI:37565"/>
    </ligand>
</feature>
<feature type="binding site" evidence="1">
    <location>
        <position position="192"/>
    </location>
    <ligand>
        <name>Mg(2+)</name>
        <dbReference type="ChEBI" id="CHEBI:18420"/>
    </ligand>
</feature>
<feature type="binding site" evidence="1">
    <location>
        <begin position="212"/>
        <end position="215"/>
    </location>
    <ligand>
        <name>GTP</name>
        <dbReference type="ChEBI" id="CHEBI:37565"/>
    </ligand>
</feature>
<feature type="binding site" evidence="1">
    <location>
        <begin position="282"/>
        <end position="285"/>
    </location>
    <ligand>
        <name>GTP</name>
        <dbReference type="ChEBI" id="CHEBI:37565"/>
    </ligand>
</feature>
<feature type="binding site" evidence="1">
    <location>
        <begin position="310"/>
        <end position="312"/>
    </location>
    <ligand>
        <name>GTP</name>
        <dbReference type="ChEBI" id="CHEBI:37565"/>
    </ligand>
</feature>
<accession>A5D410</accession>
<comment type="function">
    <text evidence="1">An essential GTPase which binds GTP, GDP and possibly (p)ppGpp with moderate affinity, with high nucleotide exchange rates and a fairly low GTP hydrolysis rate. Plays a role in control of the cell cycle, stress response, ribosome biogenesis and in those bacteria that undergo differentiation, in morphogenesis control.</text>
</comment>
<comment type="cofactor">
    <cofactor evidence="1">
        <name>Mg(2+)</name>
        <dbReference type="ChEBI" id="CHEBI:18420"/>
    </cofactor>
</comment>
<comment type="subunit">
    <text evidence="1">Monomer.</text>
</comment>
<comment type="subcellular location">
    <subcellularLocation>
        <location evidence="1">Cytoplasm</location>
    </subcellularLocation>
</comment>
<comment type="similarity">
    <text evidence="1">Belongs to the TRAFAC class OBG-HflX-like GTPase superfamily. OBG GTPase family.</text>
</comment>
<keyword id="KW-0963">Cytoplasm</keyword>
<keyword id="KW-0342">GTP-binding</keyword>
<keyword id="KW-0378">Hydrolase</keyword>
<keyword id="KW-0460">Magnesium</keyword>
<keyword id="KW-0479">Metal-binding</keyword>
<keyword id="KW-0547">Nucleotide-binding</keyword>
<keyword id="KW-1185">Reference proteome</keyword>
<dbReference type="EC" id="3.6.5.-" evidence="1"/>
<dbReference type="EMBL" id="AP009389">
    <property type="protein sequence ID" value="BAF59014.1"/>
    <property type="molecule type" value="Genomic_DNA"/>
</dbReference>
<dbReference type="SMR" id="A5D410"/>
<dbReference type="STRING" id="370438.PTH_0833"/>
<dbReference type="KEGG" id="pth:PTH_0833"/>
<dbReference type="eggNOG" id="COG0536">
    <property type="taxonomic scope" value="Bacteria"/>
</dbReference>
<dbReference type="HOGENOM" id="CLU_011747_2_1_9"/>
<dbReference type="Proteomes" id="UP000006556">
    <property type="component" value="Chromosome"/>
</dbReference>
<dbReference type="GO" id="GO:0005737">
    <property type="term" value="C:cytoplasm"/>
    <property type="evidence" value="ECO:0007669"/>
    <property type="project" value="UniProtKB-SubCell"/>
</dbReference>
<dbReference type="GO" id="GO:0005525">
    <property type="term" value="F:GTP binding"/>
    <property type="evidence" value="ECO:0007669"/>
    <property type="project" value="UniProtKB-UniRule"/>
</dbReference>
<dbReference type="GO" id="GO:0003924">
    <property type="term" value="F:GTPase activity"/>
    <property type="evidence" value="ECO:0007669"/>
    <property type="project" value="UniProtKB-UniRule"/>
</dbReference>
<dbReference type="GO" id="GO:0000287">
    <property type="term" value="F:magnesium ion binding"/>
    <property type="evidence" value="ECO:0007669"/>
    <property type="project" value="InterPro"/>
</dbReference>
<dbReference type="GO" id="GO:0042254">
    <property type="term" value="P:ribosome biogenesis"/>
    <property type="evidence" value="ECO:0007669"/>
    <property type="project" value="UniProtKB-UniRule"/>
</dbReference>
<dbReference type="CDD" id="cd01898">
    <property type="entry name" value="Obg"/>
    <property type="match status" value="1"/>
</dbReference>
<dbReference type="FunFam" id="2.70.210.12:FF:000001">
    <property type="entry name" value="GTPase Obg"/>
    <property type="match status" value="1"/>
</dbReference>
<dbReference type="Gene3D" id="3.30.300.350">
    <property type="entry name" value="GTP-binding protein OBG, C-terminal domain"/>
    <property type="match status" value="1"/>
</dbReference>
<dbReference type="Gene3D" id="2.70.210.12">
    <property type="entry name" value="GTP1/OBG domain"/>
    <property type="match status" value="1"/>
</dbReference>
<dbReference type="Gene3D" id="3.40.50.300">
    <property type="entry name" value="P-loop containing nucleotide triphosphate hydrolases"/>
    <property type="match status" value="1"/>
</dbReference>
<dbReference type="HAMAP" id="MF_01454">
    <property type="entry name" value="GTPase_Obg"/>
    <property type="match status" value="1"/>
</dbReference>
<dbReference type="InterPro" id="IPR031167">
    <property type="entry name" value="G_OBG"/>
</dbReference>
<dbReference type="InterPro" id="IPR006073">
    <property type="entry name" value="GTP-bd"/>
</dbReference>
<dbReference type="InterPro" id="IPR014100">
    <property type="entry name" value="GTP-bd_Obg/CgtA"/>
</dbReference>
<dbReference type="InterPro" id="IPR036346">
    <property type="entry name" value="GTP-bd_prot_GTP1/OBG_C_sf"/>
</dbReference>
<dbReference type="InterPro" id="IPR006074">
    <property type="entry name" value="GTP1-OBG_CS"/>
</dbReference>
<dbReference type="InterPro" id="IPR006169">
    <property type="entry name" value="GTP1_OBG_dom"/>
</dbReference>
<dbReference type="InterPro" id="IPR036726">
    <property type="entry name" value="GTP1_OBG_dom_sf"/>
</dbReference>
<dbReference type="InterPro" id="IPR045086">
    <property type="entry name" value="OBG_GTPase"/>
</dbReference>
<dbReference type="InterPro" id="IPR015349">
    <property type="entry name" value="OCT_dom"/>
</dbReference>
<dbReference type="InterPro" id="IPR027417">
    <property type="entry name" value="P-loop_NTPase"/>
</dbReference>
<dbReference type="NCBIfam" id="TIGR02729">
    <property type="entry name" value="Obg_CgtA"/>
    <property type="match status" value="1"/>
</dbReference>
<dbReference type="NCBIfam" id="TIGR03595">
    <property type="entry name" value="Obg_CgtA_exten"/>
    <property type="match status" value="1"/>
</dbReference>
<dbReference type="NCBIfam" id="NF008954">
    <property type="entry name" value="PRK12296.1"/>
    <property type="match status" value="1"/>
</dbReference>
<dbReference type="NCBIfam" id="NF008955">
    <property type="entry name" value="PRK12297.1"/>
    <property type="match status" value="1"/>
</dbReference>
<dbReference type="NCBIfam" id="NF008956">
    <property type="entry name" value="PRK12299.1"/>
    <property type="match status" value="1"/>
</dbReference>
<dbReference type="PANTHER" id="PTHR11702">
    <property type="entry name" value="DEVELOPMENTALLY REGULATED GTP-BINDING PROTEIN-RELATED"/>
    <property type="match status" value="1"/>
</dbReference>
<dbReference type="PANTHER" id="PTHR11702:SF31">
    <property type="entry name" value="MITOCHONDRIAL RIBOSOME-ASSOCIATED GTPASE 2"/>
    <property type="match status" value="1"/>
</dbReference>
<dbReference type="Pfam" id="PF09269">
    <property type="entry name" value="DUF1967"/>
    <property type="match status" value="1"/>
</dbReference>
<dbReference type="Pfam" id="PF01018">
    <property type="entry name" value="GTP1_OBG"/>
    <property type="match status" value="1"/>
</dbReference>
<dbReference type="Pfam" id="PF01926">
    <property type="entry name" value="MMR_HSR1"/>
    <property type="match status" value="1"/>
</dbReference>
<dbReference type="PRINTS" id="PR00326">
    <property type="entry name" value="GTP1OBG"/>
</dbReference>
<dbReference type="SUPFAM" id="SSF102741">
    <property type="entry name" value="Obg GTP-binding protein C-terminal domain"/>
    <property type="match status" value="1"/>
</dbReference>
<dbReference type="SUPFAM" id="SSF82051">
    <property type="entry name" value="Obg GTP-binding protein N-terminal domain"/>
    <property type="match status" value="1"/>
</dbReference>
<dbReference type="SUPFAM" id="SSF52540">
    <property type="entry name" value="P-loop containing nucleoside triphosphate hydrolases"/>
    <property type="match status" value="1"/>
</dbReference>
<dbReference type="PROSITE" id="PS51710">
    <property type="entry name" value="G_OBG"/>
    <property type="match status" value="1"/>
</dbReference>
<dbReference type="PROSITE" id="PS00905">
    <property type="entry name" value="GTP1_OBG"/>
    <property type="match status" value="1"/>
</dbReference>
<dbReference type="PROSITE" id="PS51883">
    <property type="entry name" value="OBG"/>
    <property type="match status" value="1"/>
</dbReference>
<dbReference type="PROSITE" id="PS51881">
    <property type="entry name" value="OCT"/>
    <property type="match status" value="1"/>
</dbReference>
<evidence type="ECO:0000255" key="1">
    <source>
        <dbReference type="HAMAP-Rule" id="MF_01454"/>
    </source>
</evidence>
<evidence type="ECO:0000255" key="2">
    <source>
        <dbReference type="PROSITE-ProRule" id="PRU01229"/>
    </source>
</evidence>
<evidence type="ECO:0000255" key="3">
    <source>
        <dbReference type="PROSITE-ProRule" id="PRU01231"/>
    </source>
</evidence>
<protein>
    <recommendedName>
        <fullName evidence="1">GTPase Obg</fullName>
        <ecNumber evidence="1">3.6.5.-</ecNumber>
    </recommendedName>
    <alternativeName>
        <fullName evidence="1">GTP-binding protein Obg</fullName>
    </alternativeName>
</protein>
<reference key="1">
    <citation type="journal article" date="2008" name="Genome Res.">
        <title>The genome of Pelotomaculum thermopropionicum reveals niche-associated evolution in anaerobic microbiota.</title>
        <authorList>
            <person name="Kosaka T."/>
            <person name="Kato S."/>
            <person name="Shimoyama T."/>
            <person name="Ishii S."/>
            <person name="Abe T."/>
            <person name="Watanabe K."/>
        </authorList>
    </citation>
    <scope>NUCLEOTIDE SEQUENCE [LARGE SCALE GENOMIC DNA]</scope>
    <source>
        <strain>DSM 13744 / JCM 10971 / SI</strain>
    </source>
</reference>
<proteinExistence type="inferred from homology"/>
<gene>
    <name evidence="1" type="primary">obg</name>
    <name type="ordered locus">PTH_0833</name>
</gene>
<organism>
    <name type="scientific">Pelotomaculum thermopropionicum (strain DSM 13744 / JCM 10971 / SI)</name>
    <dbReference type="NCBI Taxonomy" id="370438"/>
    <lineage>
        <taxon>Bacteria</taxon>
        <taxon>Bacillati</taxon>
        <taxon>Bacillota</taxon>
        <taxon>Clostridia</taxon>
        <taxon>Eubacteriales</taxon>
        <taxon>Desulfotomaculaceae</taxon>
        <taxon>Pelotomaculum</taxon>
    </lineage>
</organism>
<sequence>MFYDRARIFVKGGDGGNGCVAMRREKYVPEGGPWGGDGGRGGNVILRADGGLRTLVDFRYKRHYKAERGRHGEGKNMHGASGEDLVIRVPAGTVVKDAATGELIADLVRDGQEAVVARGGRGGRGNARFVTPQNRAPRMAEKGEPGEERWLDLELKLLADVGLVGFPNAGKSTLISRVSAARPKIASYPFTTITPNLGVVRVDDGRSFVMADIPGLIEGAHKGAGLGHDFLRHVERTRLLVHVLDTAGSEGRDPVQDFLVTNRELSLYNPALGRRPQVIAANKMDLDGAAENLARLKEAYGGKYEIFPVSAVTGQGLEALVYRVSALLEEIPAGAAVPEALERPVIHQAGPRFTVCREEGVFLVGGKEIERHVVMTDLKNEEAVERLQRIIRRMGIEEALKEAGIKDGDTVRIGDYEFEYVE</sequence>